<feature type="chain" id="PRO_1000135738" description="3-isopropylmalate dehydratase large subunit">
    <location>
        <begin position="1"/>
        <end position="417"/>
    </location>
</feature>
<feature type="binding site" evidence="1">
    <location>
        <position position="298"/>
    </location>
    <ligand>
        <name>[4Fe-4S] cluster</name>
        <dbReference type="ChEBI" id="CHEBI:49883"/>
    </ligand>
</feature>
<feature type="binding site" evidence="1">
    <location>
        <position position="358"/>
    </location>
    <ligand>
        <name>[4Fe-4S] cluster</name>
        <dbReference type="ChEBI" id="CHEBI:49883"/>
    </ligand>
</feature>
<feature type="binding site" evidence="1">
    <location>
        <position position="361"/>
    </location>
    <ligand>
        <name>[4Fe-4S] cluster</name>
        <dbReference type="ChEBI" id="CHEBI:49883"/>
    </ligand>
</feature>
<proteinExistence type="inferred from homology"/>
<name>LEUC_THEP3</name>
<protein>
    <recommendedName>
        <fullName evidence="1">3-isopropylmalate dehydratase large subunit</fullName>
        <ecNumber evidence="1">4.2.1.33</ecNumber>
    </recommendedName>
    <alternativeName>
        <fullName evidence="1">Alpha-IPM isomerase</fullName>
        <shortName evidence="1">IPMI</shortName>
    </alternativeName>
    <alternativeName>
        <fullName evidence="1">Isopropylmalate isomerase</fullName>
    </alternativeName>
</protein>
<evidence type="ECO:0000255" key="1">
    <source>
        <dbReference type="HAMAP-Rule" id="MF_01027"/>
    </source>
</evidence>
<organism>
    <name type="scientific">Thermoanaerobacter pseudethanolicus (strain ATCC 33223 / 39E)</name>
    <name type="common">Clostridium thermohydrosulfuricum</name>
    <dbReference type="NCBI Taxonomy" id="340099"/>
    <lineage>
        <taxon>Bacteria</taxon>
        <taxon>Bacillati</taxon>
        <taxon>Bacillota</taxon>
        <taxon>Clostridia</taxon>
        <taxon>Thermoanaerobacterales</taxon>
        <taxon>Thermoanaerobacteraceae</taxon>
        <taxon>Thermoanaerobacter</taxon>
    </lineage>
</organism>
<comment type="function">
    <text evidence="1">Catalyzes the isomerization between 2-isopropylmalate and 3-isopropylmalate, via the formation of 2-isopropylmaleate.</text>
</comment>
<comment type="catalytic activity">
    <reaction evidence="1">
        <text>(2R,3S)-3-isopropylmalate = (2S)-2-isopropylmalate</text>
        <dbReference type="Rhea" id="RHEA:32287"/>
        <dbReference type="ChEBI" id="CHEBI:1178"/>
        <dbReference type="ChEBI" id="CHEBI:35121"/>
        <dbReference type="EC" id="4.2.1.33"/>
    </reaction>
</comment>
<comment type="cofactor">
    <cofactor evidence="1">
        <name>[4Fe-4S] cluster</name>
        <dbReference type="ChEBI" id="CHEBI:49883"/>
    </cofactor>
    <text evidence="1">Binds 1 [4Fe-4S] cluster per subunit.</text>
</comment>
<comment type="pathway">
    <text evidence="1">Amino-acid biosynthesis; L-leucine biosynthesis; L-leucine from 3-methyl-2-oxobutanoate: step 2/4.</text>
</comment>
<comment type="subunit">
    <text evidence="1">Heterodimer of LeuC and LeuD.</text>
</comment>
<comment type="similarity">
    <text evidence="1">Belongs to the aconitase/IPM isomerase family. LeuC type 2 subfamily.</text>
</comment>
<dbReference type="EC" id="4.2.1.33" evidence="1"/>
<dbReference type="EMBL" id="CP000924">
    <property type="protein sequence ID" value="ABY93689.1"/>
    <property type="molecule type" value="Genomic_DNA"/>
</dbReference>
<dbReference type="RefSeq" id="WP_003867394.1">
    <property type="nucleotide sequence ID" value="NC_010321.1"/>
</dbReference>
<dbReference type="SMR" id="B0KAH5"/>
<dbReference type="STRING" id="340099.Teth39_0016"/>
<dbReference type="KEGG" id="tpd:Teth39_0016"/>
<dbReference type="eggNOG" id="COG0065">
    <property type="taxonomic scope" value="Bacteria"/>
</dbReference>
<dbReference type="HOGENOM" id="CLU_006714_3_4_9"/>
<dbReference type="UniPathway" id="UPA00048">
    <property type="reaction ID" value="UER00071"/>
</dbReference>
<dbReference type="Proteomes" id="UP000002156">
    <property type="component" value="Chromosome"/>
</dbReference>
<dbReference type="GO" id="GO:0003861">
    <property type="term" value="F:3-isopropylmalate dehydratase activity"/>
    <property type="evidence" value="ECO:0007669"/>
    <property type="project" value="UniProtKB-UniRule"/>
</dbReference>
<dbReference type="GO" id="GO:0051539">
    <property type="term" value="F:4 iron, 4 sulfur cluster binding"/>
    <property type="evidence" value="ECO:0007669"/>
    <property type="project" value="UniProtKB-KW"/>
</dbReference>
<dbReference type="GO" id="GO:0046872">
    <property type="term" value="F:metal ion binding"/>
    <property type="evidence" value="ECO:0007669"/>
    <property type="project" value="UniProtKB-KW"/>
</dbReference>
<dbReference type="GO" id="GO:0009098">
    <property type="term" value="P:L-leucine biosynthetic process"/>
    <property type="evidence" value="ECO:0007669"/>
    <property type="project" value="UniProtKB-UniRule"/>
</dbReference>
<dbReference type="CDD" id="cd01583">
    <property type="entry name" value="IPMI"/>
    <property type="match status" value="1"/>
</dbReference>
<dbReference type="Gene3D" id="3.30.499.10">
    <property type="entry name" value="Aconitase, domain 3"/>
    <property type="match status" value="2"/>
</dbReference>
<dbReference type="HAMAP" id="MF_01027">
    <property type="entry name" value="LeuC_type2"/>
    <property type="match status" value="1"/>
</dbReference>
<dbReference type="InterPro" id="IPR015931">
    <property type="entry name" value="Acnase/IPM_dHydase_lsu_aba_1/3"/>
</dbReference>
<dbReference type="InterPro" id="IPR001030">
    <property type="entry name" value="Acoase/IPM_deHydtase_lsu_aba"/>
</dbReference>
<dbReference type="InterPro" id="IPR018136">
    <property type="entry name" value="Aconitase_4Fe-4S_BS"/>
</dbReference>
<dbReference type="InterPro" id="IPR036008">
    <property type="entry name" value="Aconitase_4Fe-4S_dom"/>
</dbReference>
<dbReference type="InterPro" id="IPR011826">
    <property type="entry name" value="HAcnase/IPMdehydase_lsu_prok"/>
</dbReference>
<dbReference type="InterPro" id="IPR006251">
    <property type="entry name" value="Homoacnase/IPMdehydase_lsu"/>
</dbReference>
<dbReference type="InterPro" id="IPR050067">
    <property type="entry name" value="IPM_dehydratase_rel_enz"/>
</dbReference>
<dbReference type="InterPro" id="IPR033941">
    <property type="entry name" value="IPMI_cat"/>
</dbReference>
<dbReference type="InterPro" id="IPR011823">
    <property type="entry name" value="IsopropMal_deHydtase_lsu_bac"/>
</dbReference>
<dbReference type="NCBIfam" id="TIGR01343">
    <property type="entry name" value="hacA_fam"/>
    <property type="match status" value="1"/>
</dbReference>
<dbReference type="NCBIfam" id="TIGR02086">
    <property type="entry name" value="IPMI_arch"/>
    <property type="match status" value="1"/>
</dbReference>
<dbReference type="NCBIfam" id="TIGR02083">
    <property type="entry name" value="LEU2"/>
    <property type="match status" value="1"/>
</dbReference>
<dbReference type="NCBIfam" id="NF001614">
    <property type="entry name" value="PRK00402.1"/>
    <property type="match status" value="1"/>
</dbReference>
<dbReference type="PANTHER" id="PTHR43822:SF16">
    <property type="entry name" value="3-ISOPROPYLMALATE DEHYDRATASE LARGE SUBUNIT 2"/>
    <property type="match status" value="1"/>
</dbReference>
<dbReference type="PANTHER" id="PTHR43822">
    <property type="entry name" value="HOMOACONITASE, MITOCHONDRIAL-RELATED"/>
    <property type="match status" value="1"/>
</dbReference>
<dbReference type="Pfam" id="PF00330">
    <property type="entry name" value="Aconitase"/>
    <property type="match status" value="2"/>
</dbReference>
<dbReference type="PRINTS" id="PR00415">
    <property type="entry name" value="ACONITASE"/>
</dbReference>
<dbReference type="SUPFAM" id="SSF53732">
    <property type="entry name" value="Aconitase iron-sulfur domain"/>
    <property type="match status" value="1"/>
</dbReference>
<dbReference type="PROSITE" id="PS00450">
    <property type="entry name" value="ACONITASE_1"/>
    <property type="match status" value="1"/>
</dbReference>
<dbReference type="PROSITE" id="PS01244">
    <property type="entry name" value="ACONITASE_2"/>
    <property type="match status" value="1"/>
</dbReference>
<accession>B0KAH5</accession>
<gene>
    <name evidence="1" type="primary">leuC</name>
    <name type="ordered locus">Teth39_0016</name>
</gene>
<keyword id="KW-0004">4Fe-4S</keyword>
<keyword id="KW-0028">Amino-acid biosynthesis</keyword>
<keyword id="KW-0100">Branched-chain amino acid biosynthesis</keyword>
<keyword id="KW-0408">Iron</keyword>
<keyword id="KW-0411">Iron-sulfur</keyword>
<keyword id="KW-0432">Leucine biosynthesis</keyword>
<keyword id="KW-0456">Lyase</keyword>
<keyword id="KW-0479">Metal-binding</keyword>
<keyword id="KW-1185">Reference proteome</keyword>
<sequence length="417" mass="45424">MGLTLTQKILSAKVGREVKPGELIEVDVDMVLGNDVTAPVAIKEFEKIGIDRVFDNTKIALVPDHFVPNKDIKSAEQVNIMRKFAKKHGIVNFFEVGQMGIEHALLPEKGLVLPGDVVIGADSHTCTYGALTCFSTGVGSTDMAAAMATGKAWFKVPEAIKFVLKGNLQKWVSGKDVILYIIGKIGVDGALYKSMEFTGNIKALSMDDRFTIANMAIEAGAKNGIFDFDEITEAYVKGRAKREYKVFERDVDAEYSEVYEISLDEIRPQVAFPHLPENTRNIDEVGKVKIDQVVIGSCTNGRISDMEIAYKILKGKKVHPDVRLLIFPATQEIYLECVKRGYIEEFIKAGAAVSTPTCGPCLGGHMGILAKGERALATTNRNFVGRMGHPESEVYLSSPAVAAASAIAGYIVSPEEV</sequence>
<reference key="1">
    <citation type="submission" date="2008-01" db="EMBL/GenBank/DDBJ databases">
        <title>Complete sequence of Thermoanaerobacter pseudethanolicus 39E.</title>
        <authorList>
            <person name="Copeland A."/>
            <person name="Lucas S."/>
            <person name="Lapidus A."/>
            <person name="Barry K."/>
            <person name="Glavina del Rio T."/>
            <person name="Dalin E."/>
            <person name="Tice H."/>
            <person name="Pitluck S."/>
            <person name="Bruce D."/>
            <person name="Goodwin L."/>
            <person name="Saunders E."/>
            <person name="Brettin T."/>
            <person name="Detter J.C."/>
            <person name="Han C."/>
            <person name="Schmutz J."/>
            <person name="Larimer F."/>
            <person name="Land M."/>
            <person name="Hauser L."/>
            <person name="Kyrpides N."/>
            <person name="Lykidis A."/>
            <person name="Hemme C."/>
            <person name="Fields M.W."/>
            <person name="He Z."/>
            <person name="Zhou J."/>
            <person name="Richardson P."/>
        </authorList>
    </citation>
    <scope>NUCLEOTIDE SEQUENCE [LARGE SCALE GENOMIC DNA]</scope>
    <source>
        <strain>ATCC 33223 / DSM 2355 / 39E</strain>
    </source>
</reference>